<feature type="chain" id="PRO_0000117454" description="NADH-ubiquinone oxidoreductase chain 1">
    <location>
        <begin position="1"/>
        <end position="318"/>
    </location>
</feature>
<feature type="transmembrane region" description="Helical" evidence="2">
    <location>
        <begin position="2"/>
        <end position="22"/>
    </location>
</feature>
<feature type="transmembrane region" description="Helical" evidence="2">
    <location>
        <begin position="70"/>
        <end position="90"/>
    </location>
</feature>
<feature type="transmembrane region" description="Helical" evidence="2">
    <location>
        <begin position="100"/>
        <end position="120"/>
    </location>
</feature>
<feature type="transmembrane region" description="Helical" evidence="2">
    <location>
        <begin position="147"/>
        <end position="167"/>
    </location>
</feature>
<feature type="transmembrane region" description="Helical" evidence="2">
    <location>
        <begin position="171"/>
        <end position="191"/>
    </location>
</feature>
<feature type="transmembrane region" description="Helical" evidence="2">
    <location>
        <begin position="223"/>
        <end position="243"/>
    </location>
</feature>
<feature type="transmembrane region" description="Helical" evidence="2">
    <location>
        <begin position="253"/>
        <end position="273"/>
    </location>
</feature>
<feature type="transmembrane region" description="Helical" evidence="2">
    <location>
        <begin position="294"/>
        <end position="314"/>
    </location>
</feature>
<proteinExistence type="inferred from homology"/>
<sequence>MFMINIISLIIPILLAVAFLTLVERKVLGYMQLRKGPNIVGPYGLLQPIADAVKLFTKEPLRPLTSSTTMFIMAPILALALALTMWVPLPMPYPLINMNLGVLFMLAMSSLAVYSILWSGWASNSKYALIGALRAVAQTISYEVTLAIILLSVLLMNGSFTLSTLIITQEHLWLIFPAWPLAMMWFISTLAETNRAPFDLTEGESELVSGFNVEYAAGPFAMFFLAEYANIIMMNIFTTLLFFGAFHNPYMPELYVINFTVKTLALTILFLWIRASYPRFRYDQLMHLLWKNFLPLTLALCMWHVTLPITSASIPPQT</sequence>
<name>NU1M_PHOVI</name>
<accession>Q00505</accession>
<reference key="1">
    <citation type="journal article" date="1992" name="J. Mol. Evol.">
        <title>The complete mitochondrial DNA sequence of the harbor seal, Phoca vitulina.</title>
        <authorList>
            <person name="Arnason U."/>
            <person name="Johnsson E."/>
        </authorList>
    </citation>
    <scope>NUCLEOTIDE SEQUENCE [GENOMIC DNA]</scope>
</reference>
<gene>
    <name type="primary">MT-ND1</name>
    <name type="synonym">MTND1</name>
    <name type="synonym">NADH1</name>
    <name type="synonym">ND1</name>
</gene>
<comment type="function">
    <text evidence="1">Core subunit of the mitochondrial membrane respiratory chain NADH dehydrogenase (Complex I) that is believed to belong to the minimal assembly required for catalysis. Complex I functions in the transfer of electrons from NADH to the respiratory chain. The immediate electron acceptor for the enzyme is believed to be ubiquinone (By similarity).</text>
</comment>
<comment type="catalytic activity">
    <reaction>
        <text>a ubiquinone + NADH + 5 H(+)(in) = a ubiquinol + NAD(+) + 4 H(+)(out)</text>
        <dbReference type="Rhea" id="RHEA:29091"/>
        <dbReference type="Rhea" id="RHEA-COMP:9565"/>
        <dbReference type="Rhea" id="RHEA-COMP:9566"/>
        <dbReference type="ChEBI" id="CHEBI:15378"/>
        <dbReference type="ChEBI" id="CHEBI:16389"/>
        <dbReference type="ChEBI" id="CHEBI:17976"/>
        <dbReference type="ChEBI" id="CHEBI:57540"/>
        <dbReference type="ChEBI" id="CHEBI:57945"/>
        <dbReference type="EC" id="7.1.1.2"/>
    </reaction>
</comment>
<comment type="subcellular location">
    <subcellularLocation>
        <location evidence="1">Mitochondrion inner membrane</location>
        <topology evidence="1">Multi-pass membrane protein</topology>
    </subcellularLocation>
</comment>
<comment type="similarity">
    <text evidence="3">Belongs to the complex I subunit 1 family.</text>
</comment>
<dbReference type="EC" id="7.1.1.2"/>
<dbReference type="EMBL" id="X63726">
    <property type="protein sequence ID" value="CAA45257.1"/>
    <property type="molecule type" value="Genomic_DNA"/>
</dbReference>
<dbReference type="PIR" id="S26151">
    <property type="entry name" value="S26151"/>
</dbReference>
<dbReference type="RefSeq" id="NP_006928.1">
    <property type="nucleotide sequence ID" value="NC_001325.1"/>
</dbReference>
<dbReference type="SMR" id="Q00505"/>
<dbReference type="GeneID" id="807650"/>
<dbReference type="CTD" id="4535"/>
<dbReference type="OrthoDB" id="10265at33554"/>
<dbReference type="GO" id="GO:0005743">
    <property type="term" value="C:mitochondrial inner membrane"/>
    <property type="evidence" value="ECO:0007669"/>
    <property type="project" value="UniProtKB-SubCell"/>
</dbReference>
<dbReference type="GO" id="GO:0008137">
    <property type="term" value="F:NADH dehydrogenase (ubiquinone) activity"/>
    <property type="evidence" value="ECO:0007669"/>
    <property type="project" value="UniProtKB-EC"/>
</dbReference>
<dbReference type="GO" id="GO:0009060">
    <property type="term" value="P:aerobic respiration"/>
    <property type="evidence" value="ECO:0007669"/>
    <property type="project" value="TreeGrafter"/>
</dbReference>
<dbReference type="HAMAP" id="MF_01350">
    <property type="entry name" value="NDH1_NuoH"/>
    <property type="match status" value="1"/>
</dbReference>
<dbReference type="InterPro" id="IPR001694">
    <property type="entry name" value="NADH_UbQ_OxRdtase_su1/FPO"/>
</dbReference>
<dbReference type="InterPro" id="IPR018086">
    <property type="entry name" value="NADH_UbQ_OxRdtase_su1_CS"/>
</dbReference>
<dbReference type="PANTHER" id="PTHR11432">
    <property type="entry name" value="NADH DEHYDROGENASE SUBUNIT 1"/>
    <property type="match status" value="1"/>
</dbReference>
<dbReference type="PANTHER" id="PTHR11432:SF3">
    <property type="entry name" value="NADH-UBIQUINONE OXIDOREDUCTASE CHAIN 1"/>
    <property type="match status" value="1"/>
</dbReference>
<dbReference type="Pfam" id="PF00146">
    <property type="entry name" value="NADHdh"/>
    <property type="match status" value="1"/>
</dbReference>
<dbReference type="PROSITE" id="PS00667">
    <property type="entry name" value="COMPLEX1_ND1_1"/>
    <property type="match status" value="1"/>
</dbReference>
<dbReference type="PROSITE" id="PS00668">
    <property type="entry name" value="COMPLEX1_ND1_2"/>
    <property type="match status" value="1"/>
</dbReference>
<geneLocation type="mitochondrion"/>
<evidence type="ECO:0000250" key="1"/>
<evidence type="ECO:0000255" key="2"/>
<evidence type="ECO:0000305" key="3"/>
<organism>
    <name type="scientific">Phoca vitulina</name>
    <name type="common">Harbor seal</name>
    <dbReference type="NCBI Taxonomy" id="9720"/>
    <lineage>
        <taxon>Eukaryota</taxon>
        <taxon>Metazoa</taxon>
        <taxon>Chordata</taxon>
        <taxon>Craniata</taxon>
        <taxon>Vertebrata</taxon>
        <taxon>Euteleostomi</taxon>
        <taxon>Mammalia</taxon>
        <taxon>Eutheria</taxon>
        <taxon>Laurasiatheria</taxon>
        <taxon>Carnivora</taxon>
        <taxon>Caniformia</taxon>
        <taxon>Pinnipedia</taxon>
        <taxon>Phocidae</taxon>
        <taxon>Phocinae</taxon>
        <taxon>Phoca</taxon>
    </lineage>
</organism>
<keyword id="KW-0249">Electron transport</keyword>
<keyword id="KW-0472">Membrane</keyword>
<keyword id="KW-0496">Mitochondrion</keyword>
<keyword id="KW-0999">Mitochondrion inner membrane</keyword>
<keyword id="KW-0520">NAD</keyword>
<keyword id="KW-0679">Respiratory chain</keyword>
<keyword id="KW-1278">Translocase</keyword>
<keyword id="KW-0812">Transmembrane</keyword>
<keyword id="KW-1133">Transmembrane helix</keyword>
<keyword id="KW-0813">Transport</keyword>
<keyword id="KW-0830">Ubiquinone</keyword>
<protein>
    <recommendedName>
        <fullName>NADH-ubiquinone oxidoreductase chain 1</fullName>
        <ecNumber>7.1.1.2</ecNumber>
    </recommendedName>
    <alternativeName>
        <fullName>NADH dehydrogenase subunit 1</fullName>
    </alternativeName>
</protein>